<protein>
    <recommendedName>
        <fullName>Ribonuclease P protein subunit p21</fullName>
        <shortName>RNaseP protein p21</shortName>
    </recommendedName>
    <alternativeName>
        <fullName>Ribonucleoprotein V</fullName>
    </alternativeName>
</protein>
<accession>Q8R040</accession>
<accession>Q80XY3</accession>
<accession>Q811B7</accession>
<accession>Q9CPX1</accession>
<feature type="initiator methionine" description="Removed" evidence="2">
    <location>
        <position position="1"/>
    </location>
</feature>
<feature type="chain" id="PRO_0000153846" description="Ribonuclease P protein subunit p21">
    <location>
        <begin position="2"/>
        <end position="150"/>
    </location>
</feature>
<feature type="region of interest" description="Disordered" evidence="3">
    <location>
        <begin position="121"/>
        <end position="150"/>
    </location>
</feature>
<feature type="compositionally biased region" description="Polar residues" evidence="3">
    <location>
        <begin position="140"/>
        <end position="150"/>
    </location>
</feature>
<feature type="binding site" evidence="1">
    <location>
        <position position="62"/>
    </location>
    <ligand>
        <name>Zn(2+)</name>
        <dbReference type="ChEBI" id="CHEBI:29105"/>
    </ligand>
</feature>
<feature type="binding site" evidence="1">
    <location>
        <position position="65"/>
    </location>
    <ligand>
        <name>Zn(2+)</name>
        <dbReference type="ChEBI" id="CHEBI:29105"/>
    </ligand>
</feature>
<feature type="binding site" evidence="1">
    <location>
        <position position="92"/>
    </location>
    <ligand>
        <name>Zn(2+)</name>
        <dbReference type="ChEBI" id="CHEBI:29105"/>
    </ligand>
</feature>
<feature type="binding site" evidence="1">
    <location>
        <position position="95"/>
    </location>
    <ligand>
        <name>Zn(2+)</name>
        <dbReference type="ChEBI" id="CHEBI:29105"/>
    </ligand>
</feature>
<feature type="modified residue" description="N-acetylalanine" evidence="2">
    <location>
        <position position="2"/>
    </location>
</feature>
<feature type="sequence conflict" description="In Ref. 1; AAP03887." evidence="4" ref="1">
    <original>Y</original>
    <variation>C</variation>
    <location>
        <position position="18"/>
    </location>
</feature>
<feature type="sequence conflict" description="In Ref. 2; CAD44293." evidence="4" ref="2">
    <original>KRLVLRQ</original>
    <variation>NAGPPA</variation>
    <location>
        <begin position="47"/>
        <end position="53"/>
    </location>
</feature>
<feature type="sequence conflict" description="In Ref. 4; AAH28491." evidence="4" ref="4">
    <original>I</original>
    <variation>M</variation>
    <location>
        <position position="141"/>
    </location>
</feature>
<gene>
    <name type="primary">Rpp21</name>
    <name type="synonym">Cat60</name>
</gene>
<sequence>MAGPVKDREAFQRLSFLYQAAHCVLSQNPENQALARFYCHTEKTIAKRLVLRQDPSVKRTLCRSCSSLLIPGLTCTQRQRRRKGQRWTVQTCLTCQRSQRFLNDPKHLLWGDRPEAQLENQADINPSEPLPNIADLPKENIQTQALNTSE</sequence>
<comment type="function">
    <text evidence="2">Component of ribonuclease P, a ribonucleoprotein complex that generates mature tRNA molecules by cleaving their 5'-ends.</text>
</comment>
<comment type="subunit">
    <text evidence="2">RNase P consists of a catalytic RNA moiety and about 10 protein subunits; POP1, POP4, POP5, POP7, RPP14, RPP21, RPP25, RPP30, RPP38 and RPP40. Within the RNase P complex, POP1, POP7 and RPP25 form the 'finger' subcomplex, POP5, RPP14, RPP40 and homodimeric RPP30 form the 'palm' subcomplex, and RPP21, POP4 and RPP38 form the 'wrist' subcomplex. All subunits of the RNase P complex interact with the catalytic RNA.</text>
</comment>
<comment type="subcellular location">
    <subcellularLocation>
        <location evidence="2">Nucleus</location>
        <location evidence="2">Nucleolus</location>
    </subcellularLocation>
</comment>
<comment type="similarity">
    <text evidence="4">Belongs to the eukaryotic/archaeal RNase P protein component 4 family.</text>
</comment>
<evidence type="ECO:0000250" key="1"/>
<evidence type="ECO:0000250" key="2">
    <source>
        <dbReference type="UniProtKB" id="Q9H633"/>
    </source>
</evidence>
<evidence type="ECO:0000256" key="3">
    <source>
        <dbReference type="SAM" id="MobiDB-lite"/>
    </source>
</evidence>
<evidence type="ECO:0000305" key="4"/>
<keyword id="KW-0007">Acetylation</keyword>
<keyword id="KW-0479">Metal-binding</keyword>
<keyword id="KW-0539">Nucleus</keyword>
<keyword id="KW-1185">Reference proteome</keyword>
<keyword id="KW-0819">tRNA processing</keyword>
<keyword id="KW-0862">Zinc</keyword>
<dbReference type="EMBL" id="AY251016">
    <property type="protein sequence ID" value="AAP03887.1"/>
    <property type="molecule type" value="mRNA"/>
</dbReference>
<dbReference type="EMBL" id="AJ504717">
    <property type="protein sequence ID" value="CAD44293.1"/>
    <property type="molecule type" value="mRNA"/>
</dbReference>
<dbReference type="EMBL" id="AK002780">
    <property type="protein sequence ID" value="BAB22353.1"/>
    <property type="molecule type" value="mRNA"/>
</dbReference>
<dbReference type="EMBL" id="AK003455">
    <property type="protein sequence ID" value="BAB22800.1"/>
    <property type="molecule type" value="mRNA"/>
</dbReference>
<dbReference type="EMBL" id="BC028491">
    <property type="protein sequence ID" value="AAH28491.1"/>
    <property type="molecule type" value="mRNA"/>
</dbReference>
<dbReference type="CCDS" id="CCDS28719.1"/>
<dbReference type="RefSeq" id="NP_080584.1">
    <property type="nucleotide sequence ID" value="NM_026308.2"/>
</dbReference>
<dbReference type="SMR" id="Q8R040"/>
<dbReference type="BioGRID" id="212359">
    <property type="interactions" value="1"/>
</dbReference>
<dbReference type="FunCoup" id="Q8R040">
    <property type="interactions" value="18"/>
</dbReference>
<dbReference type="STRING" id="10090.ENSMUSP00000025319"/>
<dbReference type="iPTMnet" id="Q8R040"/>
<dbReference type="PhosphoSitePlus" id="Q8R040"/>
<dbReference type="PaxDb" id="10090-ENSMUSP00000025319"/>
<dbReference type="PeptideAtlas" id="Q8R040"/>
<dbReference type="ProteomicsDB" id="262703"/>
<dbReference type="Pumba" id="Q8R040"/>
<dbReference type="Antibodypedia" id="34965">
    <property type="antibodies" value="53 antibodies from 14 providers"/>
</dbReference>
<dbReference type="DNASU" id="67676"/>
<dbReference type="Ensembl" id="ENSMUST00000025319.7">
    <property type="protein sequence ID" value="ENSMUSP00000025319.7"/>
    <property type="gene ID" value="ENSMUSG00000024446.14"/>
</dbReference>
<dbReference type="GeneID" id="67676"/>
<dbReference type="KEGG" id="mmu:67676"/>
<dbReference type="UCSC" id="uc008ckq.1">
    <property type="organism name" value="mouse"/>
</dbReference>
<dbReference type="AGR" id="MGI:1914926"/>
<dbReference type="CTD" id="79897"/>
<dbReference type="MGI" id="MGI:1914926">
    <property type="gene designation" value="Rpp21"/>
</dbReference>
<dbReference type="VEuPathDB" id="HostDB:ENSMUSG00000024446"/>
<dbReference type="eggNOG" id="KOG4394">
    <property type="taxonomic scope" value="Eukaryota"/>
</dbReference>
<dbReference type="GeneTree" id="ENSGT00390000003020"/>
<dbReference type="HOGENOM" id="CLU_079140_2_1_1"/>
<dbReference type="InParanoid" id="Q8R040"/>
<dbReference type="OMA" id="DPKHLLW"/>
<dbReference type="OrthoDB" id="128536at2759"/>
<dbReference type="PhylomeDB" id="Q8R040"/>
<dbReference type="TreeFam" id="TF323865"/>
<dbReference type="Reactome" id="R-MMU-6791226">
    <property type="pathway name" value="Major pathway of rRNA processing in the nucleolus and cytosol"/>
</dbReference>
<dbReference type="BioGRID-ORCS" id="67676">
    <property type="hits" value="31 hits in 80 CRISPR screens"/>
</dbReference>
<dbReference type="ChiTaRS" id="Rpp21">
    <property type="organism name" value="mouse"/>
</dbReference>
<dbReference type="PRO" id="PR:Q8R040"/>
<dbReference type="Proteomes" id="UP000000589">
    <property type="component" value="Chromosome 17"/>
</dbReference>
<dbReference type="RNAct" id="Q8R040">
    <property type="molecule type" value="protein"/>
</dbReference>
<dbReference type="Bgee" id="ENSMUSG00000024446">
    <property type="expression patterns" value="Expressed in embryonic cell in blastocyst and 196 other cell types or tissues"/>
</dbReference>
<dbReference type="ExpressionAtlas" id="Q8R040">
    <property type="expression patterns" value="baseline and differential"/>
</dbReference>
<dbReference type="GO" id="GO:0030681">
    <property type="term" value="C:multimeric ribonuclease P complex"/>
    <property type="evidence" value="ECO:0007669"/>
    <property type="project" value="Ensembl"/>
</dbReference>
<dbReference type="GO" id="GO:0005730">
    <property type="term" value="C:nucleolus"/>
    <property type="evidence" value="ECO:0007669"/>
    <property type="project" value="UniProtKB-SubCell"/>
</dbReference>
<dbReference type="GO" id="GO:0046872">
    <property type="term" value="F:metal ion binding"/>
    <property type="evidence" value="ECO:0007669"/>
    <property type="project" value="UniProtKB-KW"/>
</dbReference>
<dbReference type="GO" id="GO:0004526">
    <property type="term" value="F:ribonuclease P activity"/>
    <property type="evidence" value="ECO:0007669"/>
    <property type="project" value="UniProtKB-EC"/>
</dbReference>
<dbReference type="GO" id="GO:0033204">
    <property type="term" value="F:ribonuclease P RNA binding"/>
    <property type="evidence" value="ECO:0007669"/>
    <property type="project" value="Ensembl"/>
</dbReference>
<dbReference type="GO" id="GO:0009410">
    <property type="term" value="P:response to xenobiotic stimulus"/>
    <property type="evidence" value="ECO:0007669"/>
    <property type="project" value="Ensembl"/>
</dbReference>
<dbReference type="GO" id="GO:0001682">
    <property type="term" value="P:tRNA 5'-leader removal"/>
    <property type="evidence" value="ECO:0007669"/>
    <property type="project" value="Ensembl"/>
</dbReference>
<dbReference type="Gene3D" id="6.20.50.20">
    <property type="match status" value="1"/>
</dbReference>
<dbReference type="InterPro" id="IPR007175">
    <property type="entry name" value="Rpr2/Snm1/Rpp21"/>
</dbReference>
<dbReference type="PANTHER" id="PTHR14742:SF0">
    <property type="entry name" value="RIBONUCLEASE P PROTEIN SUBUNIT P21"/>
    <property type="match status" value="1"/>
</dbReference>
<dbReference type="PANTHER" id="PTHR14742">
    <property type="entry name" value="RIBONUCLEASE P SUBUNIT P21"/>
    <property type="match status" value="1"/>
</dbReference>
<dbReference type="Pfam" id="PF04032">
    <property type="entry name" value="Rpr2"/>
    <property type="match status" value="1"/>
</dbReference>
<proteinExistence type="evidence at protein level"/>
<organism>
    <name type="scientific">Mus musculus</name>
    <name type="common">Mouse</name>
    <dbReference type="NCBI Taxonomy" id="10090"/>
    <lineage>
        <taxon>Eukaryota</taxon>
        <taxon>Metazoa</taxon>
        <taxon>Chordata</taxon>
        <taxon>Craniata</taxon>
        <taxon>Vertebrata</taxon>
        <taxon>Euteleostomi</taxon>
        <taxon>Mammalia</taxon>
        <taxon>Eutheria</taxon>
        <taxon>Euarchontoglires</taxon>
        <taxon>Glires</taxon>
        <taxon>Rodentia</taxon>
        <taxon>Myomorpha</taxon>
        <taxon>Muroidea</taxon>
        <taxon>Muridae</taxon>
        <taxon>Murinae</taxon>
        <taxon>Mus</taxon>
        <taxon>Mus</taxon>
    </lineage>
</organism>
<name>RPP21_MOUSE</name>
<reference key="1">
    <citation type="journal article" date="2003" name="Genome Res.">
        <title>Species-specific class I gene expansions formed the telomeric 1 mb of the mouse major histocompatibility complex.</title>
        <authorList>
            <person name="Takada T."/>
            <person name="Kumanovics A."/>
            <person name="Amadou C."/>
            <person name="Yoshino M."/>
            <person name="Jones E.P."/>
            <person name="Athanasiou M."/>
            <person name="Evans G.A."/>
            <person name="Lindahl K.F."/>
        </authorList>
    </citation>
    <scope>NUCLEOTIDE SEQUENCE [MRNA]</scope>
    <source>
        <strain>129/SvJ</strain>
        <tissue>Testis</tissue>
    </source>
</reference>
<reference key="2">
    <citation type="submission" date="2002-08" db="EMBL/GenBank/DDBJ databases">
        <title>Genes from major histocompatibility complex (MHC) class I region from HLA-C to HLA-A.</title>
        <authorList>
            <person name="Raha-Chowdhury R."/>
            <person name="Andrews S.R."/>
            <person name="Gruen J.R."/>
            <person name="Weissman S.M."/>
        </authorList>
    </citation>
    <scope>NUCLEOTIDE SEQUENCE [MRNA]</scope>
    <source>
        <strain>C57BL/6J</strain>
        <tissue>Spleen</tissue>
    </source>
</reference>
<reference key="3">
    <citation type="journal article" date="2005" name="Science">
        <title>The transcriptional landscape of the mammalian genome.</title>
        <authorList>
            <person name="Carninci P."/>
            <person name="Kasukawa T."/>
            <person name="Katayama S."/>
            <person name="Gough J."/>
            <person name="Frith M.C."/>
            <person name="Maeda N."/>
            <person name="Oyama R."/>
            <person name="Ravasi T."/>
            <person name="Lenhard B."/>
            <person name="Wells C."/>
            <person name="Kodzius R."/>
            <person name="Shimokawa K."/>
            <person name="Bajic V.B."/>
            <person name="Brenner S.E."/>
            <person name="Batalov S."/>
            <person name="Forrest A.R."/>
            <person name="Zavolan M."/>
            <person name="Davis M.J."/>
            <person name="Wilming L.G."/>
            <person name="Aidinis V."/>
            <person name="Allen J.E."/>
            <person name="Ambesi-Impiombato A."/>
            <person name="Apweiler R."/>
            <person name="Aturaliya R.N."/>
            <person name="Bailey T.L."/>
            <person name="Bansal M."/>
            <person name="Baxter L."/>
            <person name="Beisel K.W."/>
            <person name="Bersano T."/>
            <person name="Bono H."/>
            <person name="Chalk A.M."/>
            <person name="Chiu K.P."/>
            <person name="Choudhary V."/>
            <person name="Christoffels A."/>
            <person name="Clutterbuck D.R."/>
            <person name="Crowe M.L."/>
            <person name="Dalla E."/>
            <person name="Dalrymple B.P."/>
            <person name="de Bono B."/>
            <person name="Della Gatta G."/>
            <person name="di Bernardo D."/>
            <person name="Down T."/>
            <person name="Engstrom P."/>
            <person name="Fagiolini M."/>
            <person name="Faulkner G."/>
            <person name="Fletcher C.F."/>
            <person name="Fukushima T."/>
            <person name="Furuno M."/>
            <person name="Futaki S."/>
            <person name="Gariboldi M."/>
            <person name="Georgii-Hemming P."/>
            <person name="Gingeras T.R."/>
            <person name="Gojobori T."/>
            <person name="Green R.E."/>
            <person name="Gustincich S."/>
            <person name="Harbers M."/>
            <person name="Hayashi Y."/>
            <person name="Hensch T.K."/>
            <person name="Hirokawa N."/>
            <person name="Hill D."/>
            <person name="Huminiecki L."/>
            <person name="Iacono M."/>
            <person name="Ikeo K."/>
            <person name="Iwama A."/>
            <person name="Ishikawa T."/>
            <person name="Jakt M."/>
            <person name="Kanapin A."/>
            <person name="Katoh M."/>
            <person name="Kawasawa Y."/>
            <person name="Kelso J."/>
            <person name="Kitamura H."/>
            <person name="Kitano H."/>
            <person name="Kollias G."/>
            <person name="Krishnan S.P."/>
            <person name="Kruger A."/>
            <person name="Kummerfeld S.K."/>
            <person name="Kurochkin I.V."/>
            <person name="Lareau L.F."/>
            <person name="Lazarevic D."/>
            <person name="Lipovich L."/>
            <person name="Liu J."/>
            <person name="Liuni S."/>
            <person name="McWilliam S."/>
            <person name="Madan Babu M."/>
            <person name="Madera M."/>
            <person name="Marchionni L."/>
            <person name="Matsuda H."/>
            <person name="Matsuzawa S."/>
            <person name="Miki H."/>
            <person name="Mignone F."/>
            <person name="Miyake S."/>
            <person name="Morris K."/>
            <person name="Mottagui-Tabar S."/>
            <person name="Mulder N."/>
            <person name="Nakano N."/>
            <person name="Nakauchi H."/>
            <person name="Ng P."/>
            <person name="Nilsson R."/>
            <person name="Nishiguchi S."/>
            <person name="Nishikawa S."/>
            <person name="Nori F."/>
            <person name="Ohara O."/>
            <person name="Okazaki Y."/>
            <person name="Orlando V."/>
            <person name="Pang K.C."/>
            <person name="Pavan W.J."/>
            <person name="Pavesi G."/>
            <person name="Pesole G."/>
            <person name="Petrovsky N."/>
            <person name="Piazza S."/>
            <person name="Reed J."/>
            <person name="Reid J.F."/>
            <person name="Ring B.Z."/>
            <person name="Ringwald M."/>
            <person name="Rost B."/>
            <person name="Ruan Y."/>
            <person name="Salzberg S.L."/>
            <person name="Sandelin A."/>
            <person name="Schneider C."/>
            <person name="Schoenbach C."/>
            <person name="Sekiguchi K."/>
            <person name="Semple C.A."/>
            <person name="Seno S."/>
            <person name="Sessa L."/>
            <person name="Sheng Y."/>
            <person name="Shibata Y."/>
            <person name="Shimada H."/>
            <person name="Shimada K."/>
            <person name="Silva D."/>
            <person name="Sinclair B."/>
            <person name="Sperling S."/>
            <person name="Stupka E."/>
            <person name="Sugiura K."/>
            <person name="Sultana R."/>
            <person name="Takenaka Y."/>
            <person name="Taki K."/>
            <person name="Tammoja K."/>
            <person name="Tan S.L."/>
            <person name="Tang S."/>
            <person name="Taylor M.S."/>
            <person name="Tegner J."/>
            <person name="Teichmann S.A."/>
            <person name="Ueda H.R."/>
            <person name="van Nimwegen E."/>
            <person name="Verardo R."/>
            <person name="Wei C.L."/>
            <person name="Yagi K."/>
            <person name="Yamanishi H."/>
            <person name="Zabarovsky E."/>
            <person name="Zhu S."/>
            <person name="Zimmer A."/>
            <person name="Hide W."/>
            <person name="Bult C."/>
            <person name="Grimmond S.M."/>
            <person name="Teasdale R.D."/>
            <person name="Liu E.T."/>
            <person name="Brusic V."/>
            <person name="Quackenbush J."/>
            <person name="Wahlestedt C."/>
            <person name="Mattick J.S."/>
            <person name="Hume D.A."/>
            <person name="Kai C."/>
            <person name="Sasaki D."/>
            <person name="Tomaru Y."/>
            <person name="Fukuda S."/>
            <person name="Kanamori-Katayama M."/>
            <person name="Suzuki M."/>
            <person name="Aoki J."/>
            <person name="Arakawa T."/>
            <person name="Iida J."/>
            <person name="Imamura K."/>
            <person name="Itoh M."/>
            <person name="Kato T."/>
            <person name="Kawaji H."/>
            <person name="Kawagashira N."/>
            <person name="Kawashima T."/>
            <person name="Kojima M."/>
            <person name="Kondo S."/>
            <person name="Konno H."/>
            <person name="Nakano K."/>
            <person name="Ninomiya N."/>
            <person name="Nishio T."/>
            <person name="Okada M."/>
            <person name="Plessy C."/>
            <person name="Shibata K."/>
            <person name="Shiraki T."/>
            <person name="Suzuki S."/>
            <person name="Tagami M."/>
            <person name="Waki K."/>
            <person name="Watahiki A."/>
            <person name="Okamura-Oho Y."/>
            <person name="Suzuki H."/>
            <person name="Kawai J."/>
            <person name="Hayashizaki Y."/>
        </authorList>
    </citation>
    <scope>NUCLEOTIDE SEQUENCE [LARGE SCALE MRNA]</scope>
    <source>
        <strain>C57BL/6J</strain>
        <tissue>Embryo</tissue>
        <tissue>Kidney</tissue>
    </source>
</reference>
<reference key="4">
    <citation type="journal article" date="2004" name="Genome Res.">
        <title>The status, quality, and expansion of the NIH full-length cDNA project: the Mammalian Gene Collection (MGC).</title>
        <authorList>
            <consortium name="The MGC Project Team"/>
        </authorList>
    </citation>
    <scope>NUCLEOTIDE SEQUENCE [LARGE SCALE MRNA]</scope>
    <source>
        <tissue>Uterus</tissue>
    </source>
</reference>
<reference key="5">
    <citation type="journal article" date="2010" name="Cell">
        <title>A tissue-specific atlas of mouse protein phosphorylation and expression.</title>
        <authorList>
            <person name="Huttlin E.L."/>
            <person name="Jedrychowski M.P."/>
            <person name="Elias J.E."/>
            <person name="Goswami T."/>
            <person name="Rad R."/>
            <person name="Beausoleil S.A."/>
            <person name="Villen J."/>
            <person name="Haas W."/>
            <person name="Sowa M.E."/>
            <person name="Gygi S.P."/>
        </authorList>
    </citation>
    <scope>IDENTIFICATION BY MASS SPECTROMETRY [LARGE SCALE ANALYSIS]</scope>
    <source>
        <tissue>Spleen</tissue>
    </source>
</reference>